<gene>
    <name evidence="1" type="primary">guaA</name>
    <name type="ordered locus">Tmel_0718</name>
</gene>
<proteinExistence type="inferred from homology"/>
<reference key="1">
    <citation type="submission" date="2007-05" db="EMBL/GenBank/DDBJ databases">
        <title>Complete sequence of Thermosipho melanesiensis BI429.</title>
        <authorList>
            <consortium name="US DOE Joint Genome Institute"/>
            <person name="Copeland A."/>
            <person name="Lucas S."/>
            <person name="Lapidus A."/>
            <person name="Barry K."/>
            <person name="Glavina del Rio T."/>
            <person name="Dalin E."/>
            <person name="Tice H."/>
            <person name="Pitluck S."/>
            <person name="Chertkov O."/>
            <person name="Brettin T."/>
            <person name="Bruce D."/>
            <person name="Detter J.C."/>
            <person name="Han C."/>
            <person name="Schmutz J."/>
            <person name="Larimer F."/>
            <person name="Land M."/>
            <person name="Hauser L."/>
            <person name="Kyrpides N."/>
            <person name="Mikhailova N."/>
            <person name="Nelson K."/>
            <person name="Gogarten J.P."/>
            <person name="Noll K."/>
            <person name="Richardson P."/>
        </authorList>
    </citation>
    <scope>NUCLEOTIDE SEQUENCE [LARGE SCALE GENOMIC DNA]</scope>
    <source>
        <strain>DSM 12029 / CIP 104789 / BI429</strain>
    </source>
</reference>
<comment type="function">
    <text evidence="1">Catalyzes the synthesis of GMP from XMP.</text>
</comment>
<comment type="catalytic activity">
    <reaction evidence="1">
        <text>XMP + L-glutamine + ATP + H2O = GMP + L-glutamate + AMP + diphosphate + 2 H(+)</text>
        <dbReference type="Rhea" id="RHEA:11680"/>
        <dbReference type="ChEBI" id="CHEBI:15377"/>
        <dbReference type="ChEBI" id="CHEBI:15378"/>
        <dbReference type="ChEBI" id="CHEBI:29985"/>
        <dbReference type="ChEBI" id="CHEBI:30616"/>
        <dbReference type="ChEBI" id="CHEBI:33019"/>
        <dbReference type="ChEBI" id="CHEBI:57464"/>
        <dbReference type="ChEBI" id="CHEBI:58115"/>
        <dbReference type="ChEBI" id="CHEBI:58359"/>
        <dbReference type="ChEBI" id="CHEBI:456215"/>
        <dbReference type="EC" id="6.3.5.2"/>
    </reaction>
</comment>
<comment type="pathway">
    <text evidence="1">Purine metabolism; GMP biosynthesis; GMP from XMP (L-Gln route): step 1/1.</text>
</comment>
<comment type="subunit">
    <text evidence="1">Homodimer.</text>
</comment>
<sequence>MKTVVVLDYGSQYTQLIVRRVREKGYYAELLPWDAKEEEVKRLNPTAIILSGGPSSVYEKDAPFVPEYVLHLNIPILGICYGLQALVHKFGGRVEKSQKREFGHAILEVEEDPLFEGLPKKFDVWMSHSDRVEKLPEGFYVIGRSENSPFAAIRNKNETIYGVQFHPEVTHTQFGSKILENFVSKIAKMEKNWEMKDFVSEKIKEIKGIVGNDKVILGLSGGVDSSVVAMLLHKAIGDNLVPVFVDTGLLRLNEGEEVKENFERLGIKIFVVDAKKRFLDALKDVEDPEEKRKIIGHTFIDVFYETSMQLLEEFGNIKYLAQGTLYPDIIESKVSERKSAAKIKTHHNVGGLPEKLPFKIIEPLRYLFKDEVRKIGEILELPQSMINRHPFPGPGLAVRIIGKVTEEAISILQKADYIFIEELKKNNLYDKVWQAFAVFLPIKSVGVMGDYRTYENVIALRAVNSFDGMTADWSKLPHEFLNKVAKRIINEVKGVNRVVYDITSKPPATIEWE</sequence>
<organism>
    <name type="scientific">Thermosipho melanesiensis (strain DSM 12029 / CIP 104789 / BI429)</name>
    <dbReference type="NCBI Taxonomy" id="391009"/>
    <lineage>
        <taxon>Bacteria</taxon>
        <taxon>Thermotogati</taxon>
        <taxon>Thermotogota</taxon>
        <taxon>Thermotogae</taxon>
        <taxon>Thermotogales</taxon>
        <taxon>Fervidobacteriaceae</taxon>
        <taxon>Thermosipho</taxon>
    </lineage>
</organism>
<protein>
    <recommendedName>
        <fullName evidence="1">GMP synthase [glutamine-hydrolyzing]</fullName>
        <ecNumber evidence="1">6.3.5.2</ecNumber>
    </recommendedName>
    <alternativeName>
        <fullName evidence="1">GMP synthetase</fullName>
    </alternativeName>
    <alternativeName>
        <fullName evidence="1">Glutamine amidotransferase</fullName>
    </alternativeName>
</protein>
<dbReference type="EC" id="6.3.5.2" evidence="1"/>
<dbReference type="EMBL" id="CP000716">
    <property type="protein sequence ID" value="ABR30582.1"/>
    <property type="molecule type" value="Genomic_DNA"/>
</dbReference>
<dbReference type="RefSeq" id="WP_012056943.1">
    <property type="nucleotide sequence ID" value="NC_009616.1"/>
</dbReference>
<dbReference type="SMR" id="A6LKY1"/>
<dbReference type="STRING" id="391009.Tmel_0718"/>
<dbReference type="MEROPS" id="C26.957"/>
<dbReference type="KEGG" id="tme:Tmel_0718"/>
<dbReference type="eggNOG" id="COG0518">
    <property type="taxonomic scope" value="Bacteria"/>
</dbReference>
<dbReference type="eggNOG" id="COG0519">
    <property type="taxonomic scope" value="Bacteria"/>
</dbReference>
<dbReference type="HOGENOM" id="CLU_014340_0_5_0"/>
<dbReference type="OrthoDB" id="9802219at2"/>
<dbReference type="UniPathway" id="UPA00189">
    <property type="reaction ID" value="UER00296"/>
</dbReference>
<dbReference type="Proteomes" id="UP000001110">
    <property type="component" value="Chromosome"/>
</dbReference>
<dbReference type="GO" id="GO:0005829">
    <property type="term" value="C:cytosol"/>
    <property type="evidence" value="ECO:0007669"/>
    <property type="project" value="TreeGrafter"/>
</dbReference>
<dbReference type="GO" id="GO:0005524">
    <property type="term" value="F:ATP binding"/>
    <property type="evidence" value="ECO:0007669"/>
    <property type="project" value="UniProtKB-UniRule"/>
</dbReference>
<dbReference type="GO" id="GO:0003921">
    <property type="term" value="F:GMP synthase activity"/>
    <property type="evidence" value="ECO:0007669"/>
    <property type="project" value="InterPro"/>
</dbReference>
<dbReference type="CDD" id="cd01742">
    <property type="entry name" value="GATase1_GMP_Synthase"/>
    <property type="match status" value="1"/>
</dbReference>
<dbReference type="CDD" id="cd01997">
    <property type="entry name" value="GMP_synthase_C"/>
    <property type="match status" value="1"/>
</dbReference>
<dbReference type="FunFam" id="3.30.300.10:FF:000002">
    <property type="entry name" value="GMP synthase [glutamine-hydrolyzing]"/>
    <property type="match status" value="1"/>
</dbReference>
<dbReference type="FunFam" id="3.40.50.620:FF:000001">
    <property type="entry name" value="GMP synthase [glutamine-hydrolyzing]"/>
    <property type="match status" value="1"/>
</dbReference>
<dbReference type="FunFam" id="3.40.50.880:FF:000001">
    <property type="entry name" value="GMP synthase [glutamine-hydrolyzing]"/>
    <property type="match status" value="1"/>
</dbReference>
<dbReference type="Gene3D" id="3.30.300.10">
    <property type="match status" value="1"/>
</dbReference>
<dbReference type="Gene3D" id="3.40.50.880">
    <property type="match status" value="1"/>
</dbReference>
<dbReference type="Gene3D" id="3.40.50.620">
    <property type="entry name" value="HUPs"/>
    <property type="match status" value="1"/>
</dbReference>
<dbReference type="HAMAP" id="MF_00344">
    <property type="entry name" value="GMP_synthase"/>
    <property type="match status" value="1"/>
</dbReference>
<dbReference type="InterPro" id="IPR029062">
    <property type="entry name" value="Class_I_gatase-like"/>
</dbReference>
<dbReference type="InterPro" id="IPR017926">
    <property type="entry name" value="GATASE"/>
</dbReference>
<dbReference type="InterPro" id="IPR001674">
    <property type="entry name" value="GMP_synth_C"/>
</dbReference>
<dbReference type="InterPro" id="IPR004739">
    <property type="entry name" value="GMP_synth_GATase"/>
</dbReference>
<dbReference type="InterPro" id="IPR022955">
    <property type="entry name" value="GMP_synthase"/>
</dbReference>
<dbReference type="InterPro" id="IPR025777">
    <property type="entry name" value="GMPS_ATP_PPase_dom"/>
</dbReference>
<dbReference type="InterPro" id="IPR022310">
    <property type="entry name" value="NAD/GMP_synthase"/>
</dbReference>
<dbReference type="InterPro" id="IPR014729">
    <property type="entry name" value="Rossmann-like_a/b/a_fold"/>
</dbReference>
<dbReference type="NCBIfam" id="TIGR00884">
    <property type="entry name" value="guaA_Cterm"/>
    <property type="match status" value="1"/>
</dbReference>
<dbReference type="NCBIfam" id="TIGR00888">
    <property type="entry name" value="guaA_Nterm"/>
    <property type="match status" value="1"/>
</dbReference>
<dbReference type="NCBIfam" id="NF000848">
    <property type="entry name" value="PRK00074.1"/>
    <property type="match status" value="1"/>
</dbReference>
<dbReference type="PANTHER" id="PTHR11922:SF2">
    <property type="entry name" value="GMP SYNTHASE [GLUTAMINE-HYDROLYZING]"/>
    <property type="match status" value="1"/>
</dbReference>
<dbReference type="PANTHER" id="PTHR11922">
    <property type="entry name" value="GMP SYNTHASE-RELATED"/>
    <property type="match status" value="1"/>
</dbReference>
<dbReference type="Pfam" id="PF00117">
    <property type="entry name" value="GATase"/>
    <property type="match status" value="1"/>
</dbReference>
<dbReference type="Pfam" id="PF00958">
    <property type="entry name" value="GMP_synt_C"/>
    <property type="match status" value="1"/>
</dbReference>
<dbReference type="Pfam" id="PF02540">
    <property type="entry name" value="NAD_synthase"/>
    <property type="match status" value="1"/>
</dbReference>
<dbReference type="PRINTS" id="PR00097">
    <property type="entry name" value="ANTSNTHASEII"/>
</dbReference>
<dbReference type="PRINTS" id="PR00096">
    <property type="entry name" value="GATASE"/>
</dbReference>
<dbReference type="SUPFAM" id="SSF52402">
    <property type="entry name" value="Adenine nucleotide alpha hydrolases-like"/>
    <property type="match status" value="1"/>
</dbReference>
<dbReference type="SUPFAM" id="SSF52317">
    <property type="entry name" value="Class I glutamine amidotransferase-like"/>
    <property type="match status" value="1"/>
</dbReference>
<dbReference type="SUPFAM" id="SSF54810">
    <property type="entry name" value="GMP synthetase C-terminal dimerisation domain"/>
    <property type="match status" value="1"/>
</dbReference>
<dbReference type="PROSITE" id="PS51273">
    <property type="entry name" value="GATASE_TYPE_1"/>
    <property type="match status" value="1"/>
</dbReference>
<dbReference type="PROSITE" id="PS51553">
    <property type="entry name" value="GMPS_ATP_PPASE"/>
    <property type="match status" value="1"/>
</dbReference>
<feature type="chain" id="PRO_1000120445" description="GMP synthase [glutamine-hydrolyzing]">
    <location>
        <begin position="1"/>
        <end position="513"/>
    </location>
</feature>
<feature type="domain" description="Glutamine amidotransferase type-1" evidence="1">
    <location>
        <begin position="3"/>
        <end position="192"/>
    </location>
</feature>
<feature type="domain" description="GMPS ATP-PPase" evidence="1">
    <location>
        <begin position="193"/>
        <end position="388"/>
    </location>
</feature>
<feature type="active site" description="Nucleophile" evidence="1">
    <location>
        <position position="80"/>
    </location>
</feature>
<feature type="active site" evidence="1">
    <location>
        <position position="166"/>
    </location>
</feature>
<feature type="active site" evidence="1">
    <location>
        <position position="168"/>
    </location>
</feature>
<feature type="binding site" evidence="1">
    <location>
        <begin position="220"/>
        <end position="226"/>
    </location>
    <ligand>
        <name>ATP</name>
        <dbReference type="ChEBI" id="CHEBI:30616"/>
    </ligand>
</feature>
<accession>A6LKY1</accession>
<name>GUAA_THEM4</name>
<keyword id="KW-0067">ATP-binding</keyword>
<keyword id="KW-0315">Glutamine amidotransferase</keyword>
<keyword id="KW-0332">GMP biosynthesis</keyword>
<keyword id="KW-0436">Ligase</keyword>
<keyword id="KW-0547">Nucleotide-binding</keyword>
<keyword id="KW-0658">Purine biosynthesis</keyword>
<evidence type="ECO:0000255" key="1">
    <source>
        <dbReference type="HAMAP-Rule" id="MF_00344"/>
    </source>
</evidence>